<gene>
    <name type="ordered locus">c1575</name>
</gene>
<name>HEAD_ECOL6</name>
<feature type="chain" id="PRO_0000077567" description="P21 prophage-derived major head protein">
    <location>
        <begin position="1"/>
        <end position="342"/>
    </location>
</feature>
<proteinExistence type="inferred from homology"/>
<dbReference type="EMBL" id="AE014075">
    <property type="protein sequence ID" value="AAN80044.1"/>
    <property type="molecule type" value="Genomic_DNA"/>
</dbReference>
<dbReference type="RefSeq" id="WP_000522648.1">
    <property type="nucleotide sequence ID" value="NZ_CP051263.1"/>
</dbReference>
<dbReference type="SMR" id="P68649"/>
<dbReference type="STRING" id="199310.c1575"/>
<dbReference type="KEGG" id="ecc:c1575"/>
<dbReference type="eggNOG" id="ENOG502Z8WK">
    <property type="taxonomic scope" value="Bacteria"/>
</dbReference>
<dbReference type="HOGENOM" id="CLU_065950_1_0_6"/>
<dbReference type="BioCyc" id="ECOL199310:C1575-MONOMER"/>
<dbReference type="Proteomes" id="UP000001410">
    <property type="component" value="Chromosome"/>
</dbReference>
<dbReference type="Gene3D" id="3.30.1930.10">
    <property type="entry name" value="capsid protein of prophage domain"/>
    <property type="match status" value="1"/>
</dbReference>
<dbReference type="Gene3D" id="3.15.30.10">
    <property type="entry name" value="putative capsid protein of prophage domain like"/>
    <property type="match status" value="1"/>
</dbReference>
<dbReference type="HAMAP" id="MF_04133">
    <property type="entry name" value="CAPSID_LAMBDA"/>
    <property type="match status" value="1"/>
</dbReference>
<dbReference type="InterPro" id="IPR005564">
    <property type="entry name" value="Major_capsid_GpE"/>
</dbReference>
<dbReference type="Pfam" id="PF03864">
    <property type="entry name" value="Phage_cap_E"/>
    <property type="match status" value="1"/>
</dbReference>
<sequence>MGLFTTRQLLGYTEQKVKFRALFLELFFRRTVNFHTEEVMLDKITGKTPVAAYVSPVVEGKVLRHRGGETRVLRPGYVKPKHEFNYQQAVERLPGEDPSQLNDPAYRRLRIITDNLKQEEHAIVQVEEMQAVNAVLYGKYTMEGDQFEKIEVDFGRSTKNNITQGSGKEWSKQDRDTFDPTHDIDLYCDLASGLVNIAIMDGTVWRLLNGFKLFREKLDTRRGSNSQLETAVKDLGAVVSFKGYYGDLAIVVAKTSYIAEDGIEKRYLPDGMLVLGNTAADGIRCYGAIQDAQALSEGVVASSRYPKHWLTVGDPAREFTMTQSAPLMVLPDPDEFVVVQVK</sequence>
<reference key="1">
    <citation type="journal article" date="2002" name="Proc. Natl. Acad. Sci. U.S.A.">
        <title>Extensive mosaic structure revealed by the complete genome sequence of uropathogenic Escherichia coli.</title>
        <authorList>
            <person name="Welch R.A."/>
            <person name="Burland V."/>
            <person name="Plunkett G. III"/>
            <person name="Redford P."/>
            <person name="Roesch P."/>
            <person name="Rasko D."/>
            <person name="Buckles E.L."/>
            <person name="Liou S.-R."/>
            <person name="Boutin A."/>
            <person name="Hackett J."/>
            <person name="Stroud D."/>
            <person name="Mayhew G.F."/>
            <person name="Rose D.J."/>
            <person name="Zhou S."/>
            <person name="Schwartz D.C."/>
            <person name="Perna N.T."/>
            <person name="Mobley H.L.T."/>
            <person name="Donnenberg M.S."/>
            <person name="Blattner F.R."/>
        </authorList>
    </citation>
    <scope>NUCLEOTIDE SEQUENCE [LARGE SCALE GENOMIC DNA]</scope>
    <source>
        <strain>CFT073 / ATCC 700928 / UPEC</strain>
    </source>
</reference>
<organism>
    <name type="scientific">Escherichia coli O6:H1 (strain CFT073 / ATCC 700928 / UPEC)</name>
    <dbReference type="NCBI Taxonomy" id="199310"/>
    <lineage>
        <taxon>Bacteria</taxon>
        <taxon>Pseudomonadati</taxon>
        <taxon>Pseudomonadota</taxon>
        <taxon>Gammaproteobacteria</taxon>
        <taxon>Enterobacterales</taxon>
        <taxon>Enterobacteriaceae</taxon>
        <taxon>Escherichia</taxon>
    </lineage>
</organism>
<evidence type="ECO:0000305" key="1"/>
<protein>
    <recommendedName>
        <fullName>P21 prophage-derived major head protein</fullName>
    </recommendedName>
    <alternativeName>
        <fullName>Head protein gp7</fullName>
    </alternativeName>
</protein>
<keyword id="KW-0426">Late protein</keyword>
<keyword id="KW-1185">Reference proteome</keyword>
<accession>P68649</accession>
<accession>P36270</accession>
<comment type="similarity">
    <text evidence="1">Belongs to the lambda phage major capsid protein family.</text>
</comment>